<organism>
    <name type="scientific">Reclinomonas americana</name>
    <dbReference type="NCBI Taxonomy" id="48483"/>
    <lineage>
        <taxon>Eukaryota</taxon>
        <taxon>Discoba</taxon>
        <taxon>Jakobida</taxon>
        <taxon>Histionina</taxon>
        <taxon>Histionidae</taxon>
        <taxon>Reclinomonas</taxon>
    </lineage>
</organism>
<feature type="chain" id="PRO_0000124522" description="Small ribosomal subunit protein uS7m">
    <location>
        <begin position="1"/>
        <end position="159"/>
    </location>
</feature>
<comment type="function">
    <text evidence="1">One of the primary rRNA binding proteins, it binds directly to the small rRNA where it nucleates assembly of the head domain of the small subunit.</text>
</comment>
<comment type="subunit">
    <text>Part of the small ribosomal subunit.</text>
</comment>
<comment type="subcellular location">
    <subcellularLocation>
        <location>Mitochondrion</location>
    </subcellularLocation>
</comment>
<comment type="similarity">
    <text evidence="2">Belongs to the universal ribosomal protein uS7 family.</text>
</comment>
<name>RT07_RECAM</name>
<sequence>MSRKKRIYKKNTNILQEPVFNDNVLLKFINCLMFDGKKSVAEKLVYNSFREIRKETSVDPIIVFNDAIRNTTPVVQVKSIRIAGSNYQVPMEIPTHRQIMLAIKWIIESARKRTEKTMVERLSKELIDAYKNSGKAIDKKISMHKMAESNRAYAHYRWQ</sequence>
<evidence type="ECO:0000250" key="1"/>
<evidence type="ECO:0000305" key="2"/>
<proteinExistence type="inferred from homology"/>
<accession>O21240</accession>
<protein>
    <recommendedName>
        <fullName evidence="2">Small ribosomal subunit protein uS7m</fullName>
    </recommendedName>
    <alternativeName>
        <fullName>Ribosomal protein S7, mitochondrial</fullName>
    </alternativeName>
</protein>
<gene>
    <name type="primary">RPS7</name>
</gene>
<reference key="1">
    <citation type="journal article" date="1997" name="Nature">
        <title>An ancestral mitochondrial DNA resembling a eubacterial genome in miniature.</title>
        <authorList>
            <person name="Lang B.F."/>
            <person name="Burger G."/>
            <person name="O'Kelly C.J."/>
            <person name="Cedergren R."/>
            <person name="Golding G.B."/>
            <person name="Lemieux C."/>
            <person name="Sankoff D."/>
            <person name="Turmel M."/>
            <person name="Gray M.W."/>
        </authorList>
    </citation>
    <scope>NUCLEOTIDE SEQUENCE [GENOMIC DNA]</scope>
    <source>
        <strain>ATCC 50394</strain>
    </source>
</reference>
<keyword id="KW-0496">Mitochondrion</keyword>
<keyword id="KW-0687">Ribonucleoprotein</keyword>
<keyword id="KW-0689">Ribosomal protein</keyword>
<keyword id="KW-0694">RNA-binding</keyword>
<keyword id="KW-0699">rRNA-binding</keyword>
<geneLocation type="mitochondrion"/>
<dbReference type="EMBL" id="AF007261">
    <property type="protein sequence ID" value="AAD11867.1"/>
    <property type="molecule type" value="Genomic_DNA"/>
</dbReference>
<dbReference type="PIR" id="S78134">
    <property type="entry name" value="S78134"/>
</dbReference>
<dbReference type="RefSeq" id="NP_044752.1">
    <property type="nucleotide sequence ID" value="NC_001823.1"/>
</dbReference>
<dbReference type="SMR" id="O21240"/>
<dbReference type="GeneID" id="801093"/>
<dbReference type="GO" id="GO:0005739">
    <property type="term" value="C:mitochondrion"/>
    <property type="evidence" value="ECO:0007669"/>
    <property type="project" value="UniProtKB-SubCell"/>
</dbReference>
<dbReference type="GO" id="GO:0015935">
    <property type="term" value="C:small ribosomal subunit"/>
    <property type="evidence" value="ECO:0007669"/>
    <property type="project" value="InterPro"/>
</dbReference>
<dbReference type="GO" id="GO:0019843">
    <property type="term" value="F:rRNA binding"/>
    <property type="evidence" value="ECO:0007669"/>
    <property type="project" value="UniProtKB-KW"/>
</dbReference>
<dbReference type="GO" id="GO:0003735">
    <property type="term" value="F:structural constituent of ribosome"/>
    <property type="evidence" value="ECO:0007669"/>
    <property type="project" value="InterPro"/>
</dbReference>
<dbReference type="GO" id="GO:0006412">
    <property type="term" value="P:translation"/>
    <property type="evidence" value="ECO:0007669"/>
    <property type="project" value="InterPro"/>
</dbReference>
<dbReference type="CDD" id="cd14869">
    <property type="entry name" value="uS7_Bacteria"/>
    <property type="match status" value="1"/>
</dbReference>
<dbReference type="FunFam" id="1.10.455.10:FF:000001">
    <property type="entry name" value="30S ribosomal protein S7"/>
    <property type="match status" value="1"/>
</dbReference>
<dbReference type="Gene3D" id="1.10.455.10">
    <property type="entry name" value="Ribosomal protein S7 domain"/>
    <property type="match status" value="1"/>
</dbReference>
<dbReference type="HAMAP" id="MF_00480_B">
    <property type="entry name" value="Ribosomal_uS7_B"/>
    <property type="match status" value="1"/>
</dbReference>
<dbReference type="InterPro" id="IPR000235">
    <property type="entry name" value="Ribosomal_uS7"/>
</dbReference>
<dbReference type="InterPro" id="IPR005717">
    <property type="entry name" value="Ribosomal_uS7_bac/org-type"/>
</dbReference>
<dbReference type="InterPro" id="IPR020606">
    <property type="entry name" value="Ribosomal_uS7_CS"/>
</dbReference>
<dbReference type="InterPro" id="IPR023798">
    <property type="entry name" value="Ribosomal_uS7_dom"/>
</dbReference>
<dbReference type="InterPro" id="IPR036823">
    <property type="entry name" value="Ribosomal_uS7_dom_sf"/>
</dbReference>
<dbReference type="NCBIfam" id="TIGR01029">
    <property type="entry name" value="rpsG_bact"/>
    <property type="match status" value="1"/>
</dbReference>
<dbReference type="PANTHER" id="PTHR11205">
    <property type="entry name" value="RIBOSOMAL PROTEIN S7"/>
    <property type="match status" value="1"/>
</dbReference>
<dbReference type="Pfam" id="PF00177">
    <property type="entry name" value="Ribosomal_S7"/>
    <property type="match status" value="1"/>
</dbReference>
<dbReference type="PIRSF" id="PIRSF002122">
    <property type="entry name" value="RPS7p_RPS7a_RPS5e_RPS7o"/>
    <property type="match status" value="1"/>
</dbReference>
<dbReference type="SUPFAM" id="SSF47973">
    <property type="entry name" value="Ribosomal protein S7"/>
    <property type="match status" value="1"/>
</dbReference>
<dbReference type="PROSITE" id="PS00052">
    <property type="entry name" value="RIBOSOMAL_S7"/>
    <property type="match status" value="1"/>
</dbReference>